<dbReference type="EMBL" id="CR760500">
    <property type="protein sequence ID" value="CAJ81689.1"/>
    <property type="molecule type" value="mRNA"/>
</dbReference>
<dbReference type="EMBL" id="BC061403">
    <property type="protein sequence ID" value="AAH61403.1"/>
    <property type="molecule type" value="mRNA"/>
</dbReference>
<dbReference type="RefSeq" id="NP_988970.1">
    <property type="nucleotide sequence ID" value="NM_203639.1"/>
</dbReference>
<dbReference type="FunCoup" id="Q6P828">
    <property type="interactions" value="538"/>
</dbReference>
<dbReference type="STRING" id="8364.ENSXETP00000053548"/>
<dbReference type="PaxDb" id="8364-ENSXETP00000053520"/>
<dbReference type="DNASU" id="394567"/>
<dbReference type="GeneID" id="394567"/>
<dbReference type="KEGG" id="xtr:394567"/>
<dbReference type="AGR" id="Xenbase:XB-GENE-1017030"/>
<dbReference type="CTD" id="9516"/>
<dbReference type="Xenbase" id="XB-GENE-1017030">
    <property type="gene designation" value="litaf"/>
</dbReference>
<dbReference type="eggNOG" id="ENOG502S2GM">
    <property type="taxonomic scope" value="Eukaryota"/>
</dbReference>
<dbReference type="HOGENOM" id="CLU_095549_3_0_1"/>
<dbReference type="InParanoid" id="Q6P828"/>
<dbReference type="OMA" id="VTFYDRP"/>
<dbReference type="OrthoDB" id="4713066at2759"/>
<dbReference type="PhylomeDB" id="Q6P828"/>
<dbReference type="TreeFam" id="TF313294"/>
<dbReference type="Proteomes" id="UP000008143">
    <property type="component" value="Chromosome 9"/>
</dbReference>
<dbReference type="Bgee" id="ENSXETG00000024896">
    <property type="expression patterns" value="Expressed in egg cell and 17 other cell types or tissues"/>
</dbReference>
<dbReference type="GO" id="GO:0098559">
    <property type="term" value="C:cytoplasmic side of early endosome membrane"/>
    <property type="evidence" value="ECO:0000250"/>
    <property type="project" value="UniProtKB"/>
</dbReference>
<dbReference type="GO" id="GO:0098560">
    <property type="term" value="C:cytoplasmic side of late endosome membrane"/>
    <property type="evidence" value="ECO:0000250"/>
    <property type="project" value="UniProtKB"/>
</dbReference>
<dbReference type="GO" id="GO:0098574">
    <property type="term" value="C:cytoplasmic side of lysosomal membrane"/>
    <property type="evidence" value="ECO:0000250"/>
    <property type="project" value="UniProtKB"/>
</dbReference>
<dbReference type="GO" id="GO:0009898">
    <property type="term" value="C:cytoplasmic side of plasma membrane"/>
    <property type="evidence" value="ECO:0000250"/>
    <property type="project" value="UniProtKB"/>
</dbReference>
<dbReference type="GO" id="GO:0000139">
    <property type="term" value="C:Golgi membrane"/>
    <property type="evidence" value="ECO:0007669"/>
    <property type="project" value="UniProtKB-SubCell"/>
</dbReference>
<dbReference type="GO" id="GO:0005634">
    <property type="term" value="C:nucleus"/>
    <property type="evidence" value="ECO:0007669"/>
    <property type="project" value="UniProtKB-SubCell"/>
</dbReference>
<dbReference type="GO" id="GO:0003677">
    <property type="term" value="F:DNA binding"/>
    <property type="evidence" value="ECO:0007669"/>
    <property type="project" value="UniProtKB-KW"/>
</dbReference>
<dbReference type="GO" id="GO:0008270">
    <property type="term" value="F:zinc ion binding"/>
    <property type="evidence" value="ECO:0000250"/>
    <property type="project" value="UniProtKB"/>
</dbReference>
<dbReference type="InterPro" id="IPR006629">
    <property type="entry name" value="LITAF"/>
</dbReference>
<dbReference type="InterPro" id="IPR037519">
    <property type="entry name" value="LITAF_fam"/>
</dbReference>
<dbReference type="PANTHER" id="PTHR23292">
    <property type="entry name" value="LIPOPOLYSACCHARIDE-INDUCED TUMOR NECROSIS FACTOR-ALPHA FACTOR"/>
    <property type="match status" value="1"/>
</dbReference>
<dbReference type="PANTHER" id="PTHR23292:SF46">
    <property type="entry name" value="LIPOPOLYSACCHARIDE-INDUCED TUMOR NECROSIS FACTOR-ALPHA FACTOR HOMOLOG"/>
    <property type="match status" value="1"/>
</dbReference>
<dbReference type="Pfam" id="PF10601">
    <property type="entry name" value="zf-LITAF-like"/>
    <property type="match status" value="1"/>
</dbReference>
<dbReference type="SMART" id="SM00714">
    <property type="entry name" value="LITAF"/>
    <property type="match status" value="1"/>
</dbReference>
<dbReference type="PROSITE" id="PS51837">
    <property type="entry name" value="LITAF"/>
    <property type="match status" value="1"/>
</dbReference>
<protein>
    <recommendedName>
        <fullName>Lipopolysaccharide-induced tumor necrosis factor-alpha factor homolog</fullName>
        <shortName>LPS-induced TNF-alpha factor homolog</shortName>
    </recommendedName>
</protein>
<name>LITAF_XENTR</name>
<feature type="chain" id="PRO_0000084445" description="Lipopolysaccharide-induced tumor necrosis factor-alpha factor homolog">
    <location>
        <begin position="1"/>
        <end position="148"/>
    </location>
</feature>
<feature type="domain" description="LITAF" evidence="3">
    <location>
        <begin position="63"/>
        <end position="147"/>
    </location>
</feature>
<feature type="region of interest" description="Membrane-binding amphipathic helix" evidence="4">
    <location>
        <begin position="101"/>
        <end position="123"/>
    </location>
</feature>
<feature type="short sequence motif" description="PPxY motif" evidence="1">
    <location>
        <begin position="20"/>
        <end position="23"/>
    </location>
</feature>
<feature type="binding site" evidence="1">
    <location>
        <position position="83"/>
    </location>
    <ligand>
        <name>Zn(2+)</name>
        <dbReference type="ChEBI" id="CHEBI:29105"/>
    </ligand>
</feature>
<feature type="binding site" evidence="1">
    <location>
        <position position="86"/>
    </location>
    <ligand>
        <name>Zn(2+)</name>
        <dbReference type="ChEBI" id="CHEBI:29105"/>
    </ligand>
</feature>
<feature type="binding site" evidence="1">
    <location>
        <position position="135"/>
    </location>
    <ligand>
        <name>Zn(2+)</name>
        <dbReference type="ChEBI" id="CHEBI:29105"/>
    </ligand>
</feature>
<feature type="binding site" evidence="1">
    <location>
        <position position="138"/>
    </location>
    <ligand>
        <name>Zn(2+)</name>
        <dbReference type="ChEBI" id="CHEBI:29105"/>
    </ligand>
</feature>
<accession>Q6P828</accession>
<accession>Q28IB0</accession>
<reference key="1">
    <citation type="submission" date="2006-03" db="EMBL/GenBank/DDBJ databases">
        <authorList>
            <consortium name="Sanger Xenopus tropicalis EST/cDNA project"/>
        </authorList>
    </citation>
    <scope>NUCLEOTIDE SEQUENCE [LARGE SCALE MRNA]</scope>
    <source>
        <tissue>Egg</tissue>
    </source>
</reference>
<reference key="2">
    <citation type="submission" date="2003-11" db="EMBL/GenBank/DDBJ databases">
        <authorList>
            <consortium name="NIH - Xenopus Gene Collection (XGC) project"/>
        </authorList>
    </citation>
    <scope>NUCLEOTIDE SEQUENCE [LARGE SCALE MRNA]</scope>
</reference>
<organism>
    <name type="scientific">Xenopus tropicalis</name>
    <name type="common">Western clawed frog</name>
    <name type="synonym">Silurana tropicalis</name>
    <dbReference type="NCBI Taxonomy" id="8364"/>
    <lineage>
        <taxon>Eukaryota</taxon>
        <taxon>Metazoa</taxon>
        <taxon>Chordata</taxon>
        <taxon>Craniata</taxon>
        <taxon>Vertebrata</taxon>
        <taxon>Euteleostomi</taxon>
        <taxon>Amphibia</taxon>
        <taxon>Batrachia</taxon>
        <taxon>Anura</taxon>
        <taxon>Pipoidea</taxon>
        <taxon>Pipidae</taxon>
        <taxon>Xenopodinae</taxon>
        <taxon>Xenopus</taxon>
        <taxon>Silurana</taxon>
    </lineage>
</organism>
<comment type="function">
    <text evidence="1">Plays a role in endosomal protein trafficking and in targeting proteins for lysosomal degradation. May also contribute to the regulation of gene expression in the nucleus. Binds DNA (in vitro) and may play a synergistic role in the nucleus in regulating the expression of numerous cytokines.</text>
</comment>
<comment type="subcellular location">
    <subcellularLocation>
        <location evidence="1">Cytoplasm</location>
    </subcellularLocation>
    <subcellularLocation>
        <location evidence="1">Nucleus</location>
    </subcellularLocation>
    <subcellularLocation>
        <location evidence="1">Lysosome membrane</location>
        <topology evidence="1">Peripheral membrane protein</topology>
        <orientation evidence="1">Cytoplasmic side</orientation>
    </subcellularLocation>
    <subcellularLocation>
        <location evidence="1">Early endosome membrane</location>
    </subcellularLocation>
    <subcellularLocation>
        <location evidence="1">Late endosome membrane</location>
    </subcellularLocation>
    <subcellularLocation>
        <location evidence="1">Endosome membrane</location>
        <topology evidence="1">Peripheral membrane protein</topology>
        <orientation evidence="1">Cytoplasmic side</orientation>
    </subcellularLocation>
    <subcellularLocation>
        <location evidence="1">Cell membrane</location>
        <topology evidence="1">Peripheral membrane protein</topology>
        <orientation evidence="1">Cytoplasmic side</orientation>
    </subcellularLocation>
    <subcellularLocation>
        <location evidence="1">Golgi apparatus membrane</location>
    </subcellularLocation>
    <text evidence="1 2">Associated with membranes of lysosomes, early and late endosomes. Can translocate from the cytoplasm into the nucleus (By similarity). Detected at Schmidt-Lanterman incisures and in nodal regions of myelinating Schwann cells (By similarity).</text>
</comment>
<comment type="domain">
    <text evidence="1">The LITAF domain is stabilized by a bound zinc ion. The LITAF domain contains an amphipathic helix that mediates interaction with lipid membranes.</text>
</comment>
<comment type="similarity">
    <text evidence="4">Belongs to the CDIP1/LITAF family.</text>
</comment>
<proteinExistence type="evidence at transcript level"/>
<gene>
    <name type="primary">litaf</name>
    <name type="ORF">TEgg087j16.1</name>
</gene>
<evidence type="ECO:0000250" key="1">
    <source>
        <dbReference type="UniProtKB" id="Q99732"/>
    </source>
</evidence>
<evidence type="ECO:0000250" key="2">
    <source>
        <dbReference type="UniProtKB" id="Q9JLJ0"/>
    </source>
</evidence>
<evidence type="ECO:0000255" key="3">
    <source>
        <dbReference type="PROSITE-ProRule" id="PRU01181"/>
    </source>
</evidence>
<evidence type="ECO:0000305" key="4"/>
<sequence>MQTSGNYQPVPIGFTVPSAPPSYEEATFHHPPYPPLHQGMDAKNMSNPPYIVQPVPMQPPVTVQTVYVQQAMTLYDRPVQMCCRSCNSMITTRLEYSSGALAWLSCGGLCLLGCIGGCCLIPFCIDSLKDVDHYCPNCHALLGSYKRI</sequence>
<keyword id="KW-1003">Cell membrane</keyword>
<keyword id="KW-0963">Cytoplasm</keyword>
<keyword id="KW-0238">DNA-binding</keyword>
<keyword id="KW-0967">Endosome</keyword>
<keyword id="KW-0333">Golgi apparatus</keyword>
<keyword id="KW-0458">Lysosome</keyword>
<keyword id="KW-0472">Membrane</keyword>
<keyword id="KW-0479">Metal-binding</keyword>
<keyword id="KW-0539">Nucleus</keyword>
<keyword id="KW-1185">Reference proteome</keyword>
<keyword id="KW-0804">Transcription</keyword>
<keyword id="KW-0805">Transcription regulation</keyword>
<keyword id="KW-0862">Zinc</keyword>